<keyword id="KW-0007">Acetylation</keyword>
<keyword id="KW-0963">Cytoplasm</keyword>
<keyword id="KW-0378">Hydrolase</keyword>
<keyword id="KW-0413">Isomerase</keyword>
<keyword id="KW-0456">Lyase</keyword>
<keyword id="KW-0460">Magnesium</keyword>
<keyword id="KW-0464">Manganese</keyword>
<keyword id="KW-0479">Metal-binding</keyword>
<keyword id="KW-0496">Mitochondrion</keyword>
<keyword id="KW-0597">Phosphoprotein</keyword>
<keyword id="KW-1185">Reference proteome</keyword>
<keyword id="KW-0809">Transit peptide</keyword>
<sequence>MAASRPLSRFWEWGKNIVCVGRNYADHVREMQSAAPSEPVLFLKPSTAYAPEGSPVLVPAYTRNLHHELELAVVMGKRCRAVSEAAAMDYVAGYALCLDMTARDVQDECKKKGLPWTLAKSFTASCPVSAFVPKEKIPDPHNLKLWLKVNGELRQEGETSSMIFSIPYIISYVSKIMTLEEGDIILTGTPKGVGPVKENDEIQAGIHGVLSMKFKVERPEY</sequence>
<evidence type="ECO:0000250" key="1">
    <source>
        <dbReference type="UniProtKB" id="Q6AYQ8"/>
    </source>
</evidence>
<evidence type="ECO:0000250" key="2">
    <source>
        <dbReference type="UniProtKB" id="Q6P587"/>
    </source>
</evidence>
<evidence type="ECO:0000250" key="3">
    <source>
        <dbReference type="UniProtKB" id="Q8R0F8"/>
    </source>
</evidence>
<evidence type="ECO:0000255" key="4"/>
<evidence type="ECO:0000305" key="5"/>
<proteinExistence type="evidence at transcript level"/>
<organism>
    <name type="scientific">Bos taurus</name>
    <name type="common">Bovine</name>
    <dbReference type="NCBI Taxonomy" id="9913"/>
    <lineage>
        <taxon>Eukaryota</taxon>
        <taxon>Metazoa</taxon>
        <taxon>Chordata</taxon>
        <taxon>Craniata</taxon>
        <taxon>Vertebrata</taxon>
        <taxon>Euteleostomi</taxon>
        <taxon>Mammalia</taxon>
        <taxon>Eutheria</taxon>
        <taxon>Laurasiatheria</taxon>
        <taxon>Artiodactyla</taxon>
        <taxon>Ruminantia</taxon>
        <taxon>Pecora</taxon>
        <taxon>Bovidae</taxon>
        <taxon>Bovinae</taxon>
        <taxon>Bos</taxon>
    </lineage>
</organism>
<comment type="function">
    <text evidence="2">Tautomerase that converts enol-oxaloacetate, a strong inhibitor of succinate dehydrogenase, to the physiological keto form of oxaloacetate. It is thereby required to maximize aerobic respiration efficiency by preventing succinate dehydrogenase inhibition. Also acts as a weak oxaloacetate decarboxylase (ODx), catalyzing the decarboxylation of oxaloacetate (OAA) to pyruvate and CO(2), and as such is likely a regulatory enzyme in the TCA cycle. Also displays acylpyruvase activity, being able to hydrolyze acetylpyruvate and fumarylpyruvate in vitro.</text>
</comment>
<comment type="catalytic activity">
    <reaction evidence="2">
        <text>oxaloacetate = enol-oxaloacetate</text>
        <dbReference type="Rhea" id="RHEA:16021"/>
        <dbReference type="ChEBI" id="CHEBI:16452"/>
        <dbReference type="ChEBI" id="CHEBI:17479"/>
        <dbReference type="EC" id="5.3.2.2"/>
    </reaction>
    <physiologicalReaction direction="right-to-left" evidence="2">
        <dbReference type="Rhea" id="RHEA:16023"/>
    </physiologicalReaction>
</comment>
<comment type="catalytic activity">
    <reaction evidence="2">
        <text>oxaloacetate + H(+) = pyruvate + CO2</text>
        <dbReference type="Rhea" id="RHEA:15641"/>
        <dbReference type="ChEBI" id="CHEBI:15361"/>
        <dbReference type="ChEBI" id="CHEBI:15378"/>
        <dbReference type="ChEBI" id="CHEBI:16452"/>
        <dbReference type="ChEBI" id="CHEBI:16526"/>
        <dbReference type="EC" id="4.1.1.112"/>
    </reaction>
</comment>
<comment type="catalytic activity">
    <reaction evidence="2">
        <text>a 3-acylpyruvate + H2O = a carboxylate + pyruvate + H(+)</text>
        <dbReference type="Rhea" id="RHEA:19009"/>
        <dbReference type="ChEBI" id="CHEBI:15361"/>
        <dbReference type="ChEBI" id="CHEBI:15377"/>
        <dbReference type="ChEBI" id="CHEBI:15378"/>
        <dbReference type="ChEBI" id="CHEBI:29067"/>
        <dbReference type="ChEBI" id="CHEBI:57278"/>
        <dbReference type="EC" id="3.7.1.5"/>
    </reaction>
</comment>
<comment type="catalytic activity">
    <reaction evidence="2">
        <text>acetylpyruvate + H2O = acetate + pyruvate + H(+)</text>
        <dbReference type="Rhea" id="RHEA:16097"/>
        <dbReference type="ChEBI" id="CHEBI:15360"/>
        <dbReference type="ChEBI" id="CHEBI:15361"/>
        <dbReference type="ChEBI" id="CHEBI:15377"/>
        <dbReference type="ChEBI" id="CHEBI:15378"/>
        <dbReference type="ChEBI" id="CHEBI:30089"/>
    </reaction>
</comment>
<comment type="catalytic activity">
    <reaction evidence="2">
        <text>3-fumarylpyruvate + H2O = fumarate + pyruvate + H(+)</text>
        <dbReference type="Rhea" id="RHEA:26168"/>
        <dbReference type="ChEBI" id="CHEBI:15361"/>
        <dbReference type="ChEBI" id="CHEBI:15377"/>
        <dbReference type="ChEBI" id="CHEBI:15378"/>
        <dbReference type="ChEBI" id="CHEBI:16854"/>
        <dbReference type="ChEBI" id="CHEBI:29806"/>
    </reaction>
</comment>
<comment type="cofactor">
    <cofactor evidence="2">
        <name>Mg(2+)</name>
        <dbReference type="ChEBI" id="CHEBI:18420"/>
    </cofactor>
    <cofactor evidence="2">
        <name>Mn(2+)</name>
        <dbReference type="ChEBI" id="CHEBI:29035"/>
    </cofactor>
    <text evidence="2">Requires a divalent metal cation for activity.</text>
</comment>
<comment type="activity regulation">
    <text evidence="3">Oxaloacetate decarboxylation is competitively inhibited by oxalate.</text>
</comment>
<comment type="subunit">
    <text evidence="2">Homodimer.</text>
</comment>
<comment type="subcellular location">
    <subcellularLocation>
        <location evidence="2">Mitochondrion</location>
    </subcellularLocation>
    <subcellularLocation>
        <location evidence="2">Cytoplasm</location>
        <location evidence="2">Cytosol</location>
    </subcellularLocation>
</comment>
<comment type="similarity">
    <text evidence="5">Belongs to the FAH family.</text>
</comment>
<feature type="transit peptide" description="Mitochondrion" evidence="4">
    <location>
        <begin position="1"/>
        <end position="24"/>
    </location>
</feature>
<feature type="chain" id="PRO_0000285513" description="Oxaloacetate tautomerase FAHD1, mitochondrial">
    <location>
        <begin position="25"/>
        <end position="221"/>
    </location>
</feature>
<feature type="binding site" evidence="2">
    <location>
        <position position="68"/>
    </location>
    <ligand>
        <name>Mg(2+)</name>
        <dbReference type="ChEBI" id="CHEBI:18420"/>
    </ligand>
</feature>
<feature type="binding site" evidence="2">
    <location>
        <position position="70"/>
    </location>
    <ligand>
        <name>Mg(2+)</name>
        <dbReference type="ChEBI" id="CHEBI:18420"/>
    </ligand>
</feature>
<feature type="binding site" evidence="2">
    <location>
        <position position="99"/>
    </location>
    <ligand>
        <name>Mg(2+)</name>
        <dbReference type="ChEBI" id="CHEBI:18420"/>
    </ligand>
</feature>
<feature type="modified residue" description="Phosphoserine" evidence="1">
    <location>
        <position position="37"/>
    </location>
</feature>
<feature type="modified residue" description="N6-acetyllysine" evidence="3">
    <location>
        <position position="110"/>
    </location>
</feature>
<feature type="modified residue" description="N6-succinyllysine" evidence="3">
    <location>
        <position position="112"/>
    </location>
</feature>
<dbReference type="EC" id="5.3.2.2" evidence="2"/>
<dbReference type="EC" id="3.7.1.5" evidence="2"/>
<dbReference type="EC" id="4.1.1.112" evidence="2"/>
<dbReference type="EMBL" id="BC113240">
    <property type="protein sequence ID" value="AAI13241.1"/>
    <property type="molecule type" value="mRNA"/>
</dbReference>
<dbReference type="RefSeq" id="NP_001068868.1">
    <property type="nucleotide sequence ID" value="NM_001075400.1"/>
</dbReference>
<dbReference type="SMR" id="Q2HJ98"/>
<dbReference type="FunCoup" id="Q2HJ98">
    <property type="interactions" value="2120"/>
</dbReference>
<dbReference type="STRING" id="9913.ENSBTAP00000044120"/>
<dbReference type="PaxDb" id="9913-ENSBTAP00000044120"/>
<dbReference type="Ensembl" id="ENSBTAT00000046873.5">
    <property type="protein sequence ID" value="ENSBTAP00000044120.3"/>
    <property type="gene ID" value="ENSBTAG00000033015.5"/>
</dbReference>
<dbReference type="GeneID" id="509273"/>
<dbReference type="KEGG" id="bta:509273"/>
<dbReference type="CTD" id="81889"/>
<dbReference type="VEuPathDB" id="HostDB:ENSBTAG00000033015"/>
<dbReference type="VGNC" id="VGNC:28708">
    <property type="gene designation" value="FAHD1"/>
</dbReference>
<dbReference type="eggNOG" id="KOG1535">
    <property type="taxonomic scope" value="Eukaryota"/>
</dbReference>
<dbReference type="GeneTree" id="ENSGT00940000160452"/>
<dbReference type="HOGENOM" id="CLU_028458_5_0_1"/>
<dbReference type="InParanoid" id="Q2HJ98"/>
<dbReference type="OMA" id="NCRKVIC"/>
<dbReference type="OrthoDB" id="411064at2759"/>
<dbReference type="TreeFam" id="TF300911"/>
<dbReference type="Reactome" id="R-BTA-70268">
    <property type="pathway name" value="Pyruvate metabolism"/>
</dbReference>
<dbReference type="Proteomes" id="UP000009136">
    <property type="component" value="Chromosome 25"/>
</dbReference>
<dbReference type="Bgee" id="ENSBTAG00000033015">
    <property type="expression patterns" value="Expressed in longissimus thoracis muscle and 108 other cell types or tissues"/>
</dbReference>
<dbReference type="GO" id="GO:0005829">
    <property type="term" value="C:cytosol"/>
    <property type="evidence" value="ECO:0000250"/>
    <property type="project" value="UniProtKB"/>
</dbReference>
<dbReference type="GO" id="GO:0005739">
    <property type="term" value="C:mitochondrion"/>
    <property type="evidence" value="ECO:0000250"/>
    <property type="project" value="UniProtKB"/>
</dbReference>
<dbReference type="GO" id="GO:0005654">
    <property type="term" value="C:nucleoplasm"/>
    <property type="evidence" value="ECO:0007669"/>
    <property type="project" value="Ensembl"/>
</dbReference>
<dbReference type="GO" id="GO:0018773">
    <property type="term" value="F:acetylpyruvate hydrolase activity"/>
    <property type="evidence" value="ECO:0000250"/>
    <property type="project" value="UniProtKB"/>
</dbReference>
<dbReference type="GO" id="GO:0047621">
    <property type="term" value="F:acylpyruvate hydrolase activity"/>
    <property type="evidence" value="ECO:0007669"/>
    <property type="project" value="UniProtKB-EC"/>
</dbReference>
<dbReference type="GO" id="GO:0034545">
    <property type="term" value="F:fumarylpyruvate hydrolase activity"/>
    <property type="evidence" value="ECO:0000250"/>
    <property type="project" value="UniProtKB"/>
</dbReference>
<dbReference type="GO" id="GO:0046872">
    <property type="term" value="F:metal ion binding"/>
    <property type="evidence" value="ECO:0007669"/>
    <property type="project" value="UniProtKB-KW"/>
</dbReference>
<dbReference type="GO" id="GO:0008948">
    <property type="term" value="F:oxaloacetate decarboxylase activity"/>
    <property type="evidence" value="ECO:0000250"/>
    <property type="project" value="UniProtKB"/>
</dbReference>
<dbReference type="GO" id="GO:0050163">
    <property type="term" value="F:oxaloacetate tautomerase activity"/>
    <property type="evidence" value="ECO:0000250"/>
    <property type="project" value="UniProtKB"/>
</dbReference>
<dbReference type="GO" id="GO:0006107">
    <property type="term" value="P:oxaloacetate metabolic process"/>
    <property type="evidence" value="ECO:0000250"/>
    <property type="project" value="UniProtKB"/>
</dbReference>
<dbReference type="GO" id="GO:0006090">
    <property type="term" value="P:pyruvate metabolic process"/>
    <property type="evidence" value="ECO:0007669"/>
    <property type="project" value="Ensembl"/>
</dbReference>
<dbReference type="FunFam" id="3.90.850.10:FF:000003">
    <property type="entry name" value="Fumarylacetoacetate hydrolase domain-containing 1"/>
    <property type="match status" value="1"/>
</dbReference>
<dbReference type="Gene3D" id="3.90.850.10">
    <property type="entry name" value="Fumarylacetoacetase-like, C-terminal domain"/>
    <property type="match status" value="1"/>
</dbReference>
<dbReference type="InterPro" id="IPR011234">
    <property type="entry name" value="Fumarylacetoacetase-like_C"/>
</dbReference>
<dbReference type="InterPro" id="IPR036663">
    <property type="entry name" value="Fumarylacetoacetase_C_sf"/>
</dbReference>
<dbReference type="NCBIfam" id="NF007967">
    <property type="entry name" value="PRK10691.1"/>
    <property type="match status" value="1"/>
</dbReference>
<dbReference type="PANTHER" id="PTHR11820">
    <property type="entry name" value="ACYLPYRUVASE"/>
    <property type="match status" value="1"/>
</dbReference>
<dbReference type="PANTHER" id="PTHR11820:SF7">
    <property type="entry name" value="ACYLPYRUVASE FAHD1, MITOCHONDRIAL"/>
    <property type="match status" value="1"/>
</dbReference>
<dbReference type="Pfam" id="PF01557">
    <property type="entry name" value="FAA_hydrolase"/>
    <property type="match status" value="1"/>
</dbReference>
<dbReference type="SUPFAM" id="SSF56529">
    <property type="entry name" value="FAH"/>
    <property type="match status" value="1"/>
</dbReference>
<protein>
    <recommendedName>
        <fullName evidence="5">Oxaloacetate tautomerase FAHD1, mitochondrial</fullName>
        <ecNumber evidence="2">5.3.2.2</ecNumber>
    </recommendedName>
    <alternativeName>
        <fullName>Acylpyruvase FAHD1</fullName>
        <ecNumber evidence="2">3.7.1.5</ecNumber>
    </alternativeName>
    <alternativeName>
        <fullName>Fumarylacetoacetate hydrolase domain-containing protein 1</fullName>
    </alternativeName>
    <alternativeName>
        <fullName evidence="2">Oxaloacetate decarboxylase</fullName>
        <shortName evidence="2">OAA decarboxylase</shortName>
        <ecNumber evidence="2">4.1.1.112</ecNumber>
    </alternativeName>
</protein>
<gene>
    <name evidence="2" type="primary">FAHD1</name>
</gene>
<name>FAHD1_BOVIN</name>
<accession>Q2HJ98</accession>
<reference key="1">
    <citation type="submission" date="2006-02" db="EMBL/GenBank/DDBJ databases">
        <authorList>
            <consortium name="NIH - Mammalian Gene Collection (MGC) project"/>
        </authorList>
    </citation>
    <scope>NUCLEOTIDE SEQUENCE [LARGE SCALE MRNA]</scope>
    <source>
        <strain>Hereford</strain>
        <tissue>Uterus</tissue>
    </source>
</reference>